<feature type="chain" id="PRO_0000081927" description="Serine/arginine-rich splicing factor 5">
    <location>
        <begin position="1"/>
        <end position="272"/>
    </location>
</feature>
<feature type="domain" description="RRM 1" evidence="2">
    <location>
        <begin position="4"/>
        <end position="74"/>
    </location>
</feature>
<feature type="domain" description="RRM 2" evidence="2">
    <location>
        <begin position="108"/>
        <end position="181"/>
    </location>
</feature>
<feature type="region of interest" description="Disordered" evidence="3">
    <location>
        <begin position="73"/>
        <end position="105"/>
    </location>
</feature>
<feature type="region of interest" description="Disordered" evidence="3">
    <location>
        <begin position="174"/>
        <end position="272"/>
    </location>
</feature>
<feature type="compositionally biased region" description="Basic residues" evidence="3">
    <location>
        <begin position="74"/>
        <end position="83"/>
    </location>
</feature>
<feature type="compositionally biased region" description="Basic residues" evidence="3">
    <location>
        <begin position="182"/>
        <end position="229"/>
    </location>
</feature>
<feature type="compositionally biased region" description="Low complexity" evidence="3">
    <location>
        <begin position="242"/>
        <end position="254"/>
    </location>
</feature>
<feature type="modified residue" description="Phosphoserine" evidence="14">
    <location>
        <position position="86"/>
    </location>
</feature>
<feature type="modified residue" description="N6-acetyllysine" evidence="12">
    <location>
        <position position="167"/>
    </location>
</feature>
<feature type="modified residue" description="Phosphoserine" evidence="13">
    <location>
        <position position="227"/>
    </location>
</feature>
<feature type="modified residue" description="Phosphoserine" evidence="13">
    <location>
        <position position="229"/>
    </location>
</feature>
<feature type="modified residue" description="Phosphoserine" evidence="13">
    <location>
        <position position="233"/>
    </location>
</feature>
<feature type="modified residue" description="Phosphoserine" evidence="11 13">
    <location>
        <position position="250"/>
    </location>
</feature>
<feature type="modified residue" description="Phosphoserine" evidence="11 13 15">
    <location>
        <position position="253"/>
    </location>
</feature>
<feature type="splice variant" id="VSP_005863" description="In isoform SRP40-4." evidence="10">
    <location>
        <begin position="43"/>
        <end position="45"/>
    </location>
</feature>
<feature type="splice variant" id="VSP_005864" description="In isoform SRP40-2." evidence="5 6 7 8 9">
    <original>NAPPVRTE</original>
    <variation>YVKGGWLH</variation>
    <location>
        <begin position="100"/>
        <end position="107"/>
    </location>
</feature>
<feature type="splice variant" id="VSP_005865" description="In isoform SRP40-2." evidence="5 6 7 8 9">
    <location>
        <begin position="108"/>
        <end position="272"/>
    </location>
</feature>
<feature type="sequence variant" id="VAR_014713" description="In dbSNP:rs1057683.">
    <original>A</original>
    <variation>S</variation>
    <location>
        <position position="160"/>
    </location>
</feature>
<organism>
    <name type="scientific">Homo sapiens</name>
    <name type="common">Human</name>
    <dbReference type="NCBI Taxonomy" id="9606"/>
    <lineage>
        <taxon>Eukaryota</taxon>
        <taxon>Metazoa</taxon>
        <taxon>Chordata</taxon>
        <taxon>Craniata</taxon>
        <taxon>Vertebrata</taxon>
        <taxon>Euteleostomi</taxon>
        <taxon>Mammalia</taxon>
        <taxon>Eutheria</taxon>
        <taxon>Euarchontoglires</taxon>
        <taxon>Primates</taxon>
        <taxon>Haplorrhini</taxon>
        <taxon>Catarrhini</taxon>
        <taxon>Hominidae</taxon>
        <taxon>Homo</taxon>
    </lineage>
</organism>
<dbReference type="EMBL" id="U30826">
    <property type="protein sequence ID" value="AAA93070.1"/>
    <property type="molecule type" value="mRNA"/>
</dbReference>
<dbReference type="EMBL" id="U30884">
    <property type="protein sequence ID" value="AAA93074.1"/>
    <property type="molecule type" value="mRNA"/>
</dbReference>
<dbReference type="EMBL" id="U30827">
    <property type="protein sequence ID" value="AAB60405.1"/>
    <property type="molecule type" value="mRNA"/>
</dbReference>
<dbReference type="EMBL" id="BT007089">
    <property type="protein sequence ID" value="AAP35752.1"/>
    <property type="molecule type" value="mRNA"/>
</dbReference>
<dbReference type="EMBL" id="AK311805">
    <property type="protein sequence ID" value="BAG34748.1"/>
    <property type="molecule type" value="mRNA"/>
</dbReference>
<dbReference type="EMBL" id="CR542167">
    <property type="protein sequence ID" value="CAG46964.1"/>
    <property type="molecule type" value="mRNA"/>
</dbReference>
<dbReference type="EMBL" id="CR542182">
    <property type="protein sequence ID" value="CAG46979.1"/>
    <property type="molecule type" value="mRNA"/>
</dbReference>
<dbReference type="EMBL" id="BX640605">
    <property type="protein sequence ID" value="CAE45711.1"/>
    <property type="molecule type" value="mRNA"/>
</dbReference>
<dbReference type="EMBL" id="AB451250">
    <property type="protein sequence ID" value="BAG70064.1"/>
    <property type="molecule type" value="mRNA"/>
</dbReference>
<dbReference type="EMBL" id="BC018823">
    <property type="protein sequence ID" value="AAH18823.1"/>
    <property type="molecule type" value="mRNA"/>
</dbReference>
<dbReference type="EMBL" id="BC040209">
    <property type="protein sequence ID" value="AAH40209.1"/>
    <property type="molecule type" value="mRNA"/>
</dbReference>
<dbReference type="EMBL" id="AF020307">
    <property type="protein sequence ID" value="AAC39543.1"/>
    <property type="status" value="ALT_FRAME"/>
    <property type="molecule type" value="Genomic_DNA"/>
</dbReference>
<dbReference type="CCDS" id="CCDS32109.1">
    <molecule id="Q13243-1"/>
</dbReference>
<dbReference type="PIR" id="S59042">
    <property type="entry name" value="S59042"/>
</dbReference>
<dbReference type="RefSeq" id="NP_001034554.1">
    <molecule id="Q13243-1"/>
    <property type="nucleotide sequence ID" value="NM_001039465.2"/>
</dbReference>
<dbReference type="RefSeq" id="NP_001307143.1">
    <molecule id="Q13243-1"/>
    <property type="nucleotide sequence ID" value="NM_001320214.2"/>
</dbReference>
<dbReference type="RefSeq" id="NP_008856.2">
    <molecule id="Q13243-1"/>
    <property type="nucleotide sequence ID" value="NM_006925.5"/>
</dbReference>
<dbReference type="RefSeq" id="XP_054232552.1">
    <molecule id="Q13243-1"/>
    <property type="nucleotide sequence ID" value="XM_054376577.1"/>
</dbReference>
<dbReference type="RefSeq" id="XP_054232553.1">
    <molecule id="Q13243-1"/>
    <property type="nucleotide sequence ID" value="XM_054376578.1"/>
</dbReference>
<dbReference type="SMR" id="Q13243"/>
<dbReference type="BioGRID" id="112328">
    <property type="interactions" value="487"/>
</dbReference>
<dbReference type="CORUM" id="Q13243"/>
<dbReference type="DIP" id="DIP-46894N"/>
<dbReference type="FunCoup" id="Q13243">
    <property type="interactions" value="3872"/>
</dbReference>
<dbReference type="IntAct" id="Q13243">
    <property type="interactions" value="324"/>
</dbReference>
<dbReference type="MINT" id="Q13243"/>
<dbReference type="STRING" id="9606.ENSP00000452123"/>
<dbReference type="GlyGen" id="Q13243">
    <property type="glycosylation" value="3 sites, 1 O-linked glycan (3 sites)"/>
</dbReference>
<dbReference type="iPTMnet" id="Q13243"/>
<dbReference type="PhosphoSitePlus" id="Q13243"/>
<dbReference type="SwissPalm" id="Q13243"/>
<dbReference type="BioMuta" id="SRSF5"/>
<dbReference type="DMDM" id="3929378"/>
<dbReference type="jPOST" id="Q13243"/>
<dbReference type="MassIVE" id="Q13243"/>
<dbReference type="PaxDb" id="9606-ENSP00000452123"/>
<dbReference type="PeptideAtlas" id="Q13243"/>
<dbReference type="ProteomicsDB" id="59247">
    <molecule id="Q13243-1"/>
</dbReference>
<dbReference type="ProteomicsDB" id="59248">
    <molecule id="Q13243-2"/>
</dbReference>
<dbReference type="ProteomicsDB" id="59249">
    <molecule id="Q13243-3"/>
</dbReference>
<dbReference type="Pumba" id="Q13243"/>
<dbReference type="Antibodypedia" id="25065">
    <property type="antibodies" value="113 antibodies from 26 providers"/>
</dbReference>
<dbReference type="DNASU" id="6430"/>
<dbReference type="Ensembl" id="ENST00000394366.6">
    <molecule id="Q13243-1"/>
    <property type="protein sequence ID" value="ENSP00000377892.2"/>
    <property type="gene ID" value="ENSG00000100650.16"/>
</dbReference>
<dbReference type="Ensembl" id="ENST00000553521.5">
    <molecule id="Q13243-1"/>
    <property type="protein sequence ID" value="ENSP00000452123.1"/>
    <property type="gene ID" value="ENSG00000100650.16"/>
</dbReference>
<dbReference type="Ensembl" id="ENST00000553635.5">
    <molecule id="Q13243-3"/>
    <property type="protein sequence ID" value="ENSP00000451391.1"/>
    <property type="gene ID" value="ENSG00000100650.16"/>
</dbReference>
<dbReference type="Ensembl" id="ENST00000557154.6">
    <molecule id="Q13243-1"/>
    <property type="protein sequence ID" value="ENSP00000451088.1"/>
    <property type="gene ID" value="ENSG00000100650.16"/>
</dbReference>
<dbReference type="GeneID" id="6430"/>
<dbReference type="KEGG" id="hsa:6430"/>
<dbReference type="MANE-Select" id="ENST00000557154.6">
    <property type="protein sequence ID" value="ENSP00000451088.1"/>
    <property type="RefSeq nucleotide sequence ID" value="NM_001320214.2"/>
    <property type="RefSeq protein sequence ID" value="NP_001307143.1"/>
</dbReference>
<dbReference type="UCSC" id="uc001xll.4">
    <molecule id="Q13243-1"/>
    <property type="organism name" value="human"/>
</dbReference>
<dbReference type="AGR" id="HGNC:10787"/>
<dbReference type="CTD" id="6430"/>
<dbReference type="DisGeNET" id="6430"/>
<dbReference type="GeneCards" id="SRSF5"/>
<dbReference type="HGNC" id="HGNC:10787">
    <property type="gene designation" value="SRSF5"/>
</dbReference>
<dbReference type="HPA" id="ENSG00000100650">
    <property type="expression patterns" value="Low tissue specificity"/>
</dbReference>
<dbReference type="MIM" id="600914">
    <property type="type" value="gene"/>
</dbReference>
<dbReference type="neXtProt" id="NX_Q13243"/>
<dbReference type="OpenTargets" id="ENSG00000100650"/>
<dbReference type="PharmGKB" id="PA35703"/>
<dbReference type="VEuPathDB" id="HostDB:ENSG00000100650"/>
<dbReference type="eggNOG" id="KOG0106">
    <property type="taxonomic scope" value="Eukaryota"/>
</dbReference>
<dbReference type="GeneTree" id="ENSGT00940000158275"/>
<dbReference type="HOGENOM" id="CLU_012062_34_2_1"/>
<dbReference type="InParanoid" id="Q13243"/>
<dbReference type="OMA" id="HRPKVNE"/>
<dbReference type="OrthoDB" id="1099063at2759"/>
<dbReference type="PAN-GO" id="Q13243">
    <property type="GO annotations" value="3 GO annotations based on evolutionary models"/>
</dbReference>
<dbReference type="PhylomeDB" id="Q13243"/>
<dbReference type="TreeFam" id="TF351335"/>
<dbReference type="PathwayCommons" id="Q13243"/>
<dbReference type="Reactome" id="R-HSA-159236">
    <property type="pathway name" value="Transport of Mature mRNA derived from an Intron-Containing Transcript"/>
</dbReference>
<dbReference type="Reactome" id="R-HSA-72163">
    <property type="pathway name" value="mRNA Splicing - Major Pathway"/>
</dbReference>
<dbReference type="Reactome" id="R-HSA-72187">
    <property type="pathway name" value="mRNA 3'-end processing"/>
</dbReference>
<dbReference type="Reactome" id="R-HSA-72203">
    <property type="pathway name" value="Processing of Capped Intron-Containing Pre-mRNA"/>
</dbReference>
<dbReference type="Reactome" id="R-HSA-73856">
    <property type="pathway name" value="RNA Polymerase II Transcription Termination"/>
</dbReference>
<dbReference type="SignaLink" id="Q13243"/>
<dbReference type="SIGNOR" id="Q13243"/>
<dbReference type="BioGRID-ORCS" id="6430">
    <property type="hits" value="42 hits in 1162 CRISPR screens"/>
</dbReference>
<dbReference type="CD-CODE" id="91857CE7">
    <property type="entry name" value="Nucleolus"/>
</dbReference>
<dbReference type="CD-CODE" id="DEE660B4">
    <property type="entry name" value="Stress granule"/>
</dbReference>
<dbReference type="ChiTaRS" id="SRSF5">
    <property type="organism name" value="human"/>
</dbReference>
<dbReference type="GeneWiki" id="SFRS5"/>
<dbReference type="GenomeRNAi" id="6430"/>
<dbReference type="Pharos" id="Q13243">
    <property type="development level" value="Tbio"/>
</dbReference>
<dbReference type="PRO" id="PR:Q13243"/>
<dbReference type="Proteomes" id="UP000005640">
    <property type="component" value="Chromosome 14"/>
</dbReference>
<dbReference type="RNAct" id="Q13243">
    <property type="molecule type" value="protein"/>
</dbReference>
<dbReference type="Bgee" id="ENSG00000100650">
    <property type="expression patterns" value="Expressed in right uterine tube and 203 other cell types or tissues"/>
</dbReference>
<dbReference type="ExpressionAtlas" id="Q13243">
    <property type="expression patterns" value="baseline and differential"/>
</dbReference>
<dbReference type="GO" id="GO:0005829">
    <property type="term" value="C:cytosol"/>
    <property type="evidence" value="ECO:0000314"/>
    <property type="project" value="HPA"/>
</dbReference>
<dbReference type="GO" id="GO:0016607">
    <property type="term" value="C:nuclear speck"/>
    <property type="evidence" value="ECO:0000250"/>
    <property type="project" value="UniProtKB"/>
</dbReference>
<dbReference type="GO" id="GO:0005730">
    <property type="term" value="C:nucleolus"/>
    <property type="evidence" value="ECO:0000314"/>
    <property type="project" value="HPA"/>
</dbReference>
<dbReference type="GO" id="GO:0005654">
    <property type="term" value="C:nucleoplasm"/>
    <property type="evidence" value="ECO:0000314"/>
    <property type="project" value="HPA"/>
</dbReference>
<dbReference type="GO" id="GO:0043422">
    <property type="term" value="F:protein kinase B binding"/>
    <property type="evidence" value="ECO:0007669"/>
    <property type="project" value="Ensembl"/>
</dbReference>
<dbReference type="GO" id="GO:0003723">
    <property type="term" value="F:RNA binding"/>
    <property type="evidence" value="ECO:0007005"/>
    <property type="project" value="UniProtKB"/>
</dbReference>
<dbReference type="GO" id="GO:0032869">
    <property type="term" value="P:cellular response to insulin stimulus"/>
    <property type="evidence" value="ECO:0007669"/>
    <property type="project" value="Ensembl"/>
</dbReference>
<dbReference type="GO" id="GO:0097421">
    <property type="term" value="P:liver regeneration"/>
    <property type="evidence" value="ECO:0007669"/>
    <property type="project" value="Ensembl"/>
</dbReference>
<dbReference type="GO" id="GO:0006397">
    <property type="term" value="P:mRNA processing"/>
    <property type="evidence" value="ECO:0000304"/>
    <property type="project" value="ProtInc"/>
</dbReference>
<dbReference type="GO" id="GO:0006376">
    <property type="term" value="P:mRNA splice site recognition"/>
    <property type="evidence" value="ECO:0000304"/>
    <property type="project" value="ProtInc"/>
</dbReference>
<dbReference type="GO" id="GO:0000398">
    <property type="term" value="P:mRNA splicing, via spliceosome"/>
    <property type="evidence" value="ECO:0000318"/>
    <property type="project" value="GO_Central"/>
</dbReference>
<dbReference type="GO" id="GO:0033120">
    <property type="term" value="P:positive regulation of RNA splicing"/>
    <property type="evidence" value="ECO:0007669"/>
    <property type="project" value="Ensembl"/>
</dbReference>
<dbReference type="CDD" id="cd12595">
    <property type="entry name" value="RRM1_SRSF5"/>
    <property type="match status" value="1"/>
</dbReference>
<dbReference type="CDD" id="cd12765">
    <property type="entry name" value="RRM2_SRSF5"/>
    <property type="match status" value="1"/>
</dbReference>
<dbReference type="FunFam" id="3.30.70.330:FF:000028">
    <property type="entry name" value="Putative serine/arginine-rich splicing factor 4"/>
    <property type="match status" value="1"/>
</dbReference>
<dbReference type="FunFam" id="3.30.70.330:FF:000138">
    <property type="entry name" value="Serine/arginine-rich splicing factor 5 alpha"/>
    <property type="match status" value="1"/>
</dbReference>
<dbReference type="Gene3D" id="3.30.70.330">
    <property type="match status" value="2"/>
</dbReference>
<dbReference type="InterPro" id="IPR012677">
    <property type="entry name" value="Nucleotide-bd_a/b_plait_sf"/>
</dbReference>
<dbReference type="InterPro" id="IPR035979">
    <property type="entry name" value="RBD_domain_sf"/>
</dbReference>
<dbReference type="InterPro" id="IPR000504">
    <property type="entry name" value="RRM_dom"/>
</dbReference>
<dbReference type="InterPro" id="IPR050374">
    <property type="entry name" value="RRT5_SRSF_SR"/>
</dbReference>
<dbReference type="PANTHER" id="PTHR23003">
    <property type="entry name" value="RNA RECOGNITION MOTIF RRM DOMAIN CONTAINING PROTEIN"/>
    <property type="match status" value="1"/>
</dbReference>
<dbReference type="PANTHER" id="PTHR23003:SF59">
    <property type="entry name" value="SERINE AND ARGININE RICH SPLICING FACTOR 5"/>
    <property type="match status" value="1"/>
</dbReference>
<dbReference type="Pfam" id="PF00076">
    <property type="entry name" value="RRM_1"/>
    <property type="match status" value="2"/>
</dbReference>
<dbReference type="SMART" id="SM00360">
    <property type="entry name" value="RRM"/>
    <property type="match status" value="2"/>
</dbReference>
<dbReference type="SUPFAM" id="SSF54928">
    <property type="entry name" value="RNA-binding domain, RBD"/>
    <property type="match status" value="1"/>
</dbReference>
<dbReference type="PROSITE" id="PS50102">
    <property type="entry name" value="RRM"/>
    <property type="match status" value="2"/>
</dbReference>
<protein>
    <recommendedName>
        <fullName>Serine/arginine-rich splicing factor 5</fullName>
    </recommendedName>
    <alternativeName>
        <fullName>Delayed-early protein HRS</fullName>
    </alternativeName>
    <alternativeName>
        <fullName>Pre-mRNA-splicing factor SRP40</fullName>
    </alternativeName>
    <alternativeName>
        <fullName>Splicing factor, arginine/serine-rich 5</fullName>
    </alternativeName>
</protein>
<sequence>MSGCRVFIGRLNPAAREKDVERFFKGYGRIRDIDLKRGFGFVEFEDPRDADDAVYELDGKELCSERVTIEHARARSRGGRGRGRYSDRFSSRRPRNDRRNAPPVRTENRLIVENLSSRVSWQDLKDFMRQAGEVTFADAHRPKLNEGVVEFASYGDLKNAIEKLSGKEINGRKIKLIEGSKRHSRSRSRSRSRTRSSSRSRSRSRSRSRKSYSRSRSRSRSRSRSKSRSVSRSPVPEKSQKRGSSSRSKSPASVDRQRSRSRSRSRSVDSGN</sequence>
<comment type="function">
    <text>Plays a role in constitutive splicing and can modulate the selection of alternative splice sites.</text>
</comment>
<comment type="subunit">
    <text evidence="1 4">Interacts (via RS domain) with PHF5A (via N-terminus) (By similarity). Found in a pre-mRNA splicing complex with SRSF4/SFRS4, SRSF5/SFRS5, SNRNP70, SNRPA1, SRRM1 and SRRM2.</text>
</comment>
<comment type="interaction">
    <interactant intactId="EBI-720503">
        <id>Q13243</id>
    </interactant>
    <interactant intactId="EBI-593303">
        <id>P78362</id>
        <label>SRPK2</label>
    </interactant>
    <organismsDiffer>false</organismsDiffer>
    <experiments>4</experiments>
</comment>
<comment type="interaction">
    <interactant intactId="EBI-720503">
        <id>Q13243</id>
    </interactant>
    <interactant intactId="EBI-6657923">
        <id>Q15696</id>
        <label>ZRSR2</label>
    </interactant>
    <organismsDiffer>false</organismsDiffer>
    <experiments>3</experiments>
</comment>
<comment type="subcellular location">
    <subcellularLocation>
        <location>Nucleus</location>
    </subcellularLocation>
</comment>
<comment type="alternative products">
    <event type="alternative splicing"/>
    <isoform>
        <id>Q13243-1</id>
        <name>SRP40-1</name>
        <sequence type="displayed"/>
    </isoform>
    <isoform>
        <id>Q13243-2</id>
        <name>SRP40-2</name>
        <sequence type="described" ref="VSP_005864 VSP_005865"/>
    </isoform>
    <isoform>
        <id>Q13243-4</id>
        <name>SRP40-3</name>
        <sequence type="not described"/>
    </isoform>
    <isoform>
        <id>Q13243-3</id>
        <name>SRP40-4</name>
        <sequence type="described" ref="VSP_005863"/>
    </isoform>
</comment>
<comment type="PTM">
    <text evidence="1">Extensively phosphorylated on serine residues in the RS domain.</text>
</comment>
<comment type="miscellaneous">
    <molecule>Isoform SRP40-2</molecule>
    <text evidence="10">May be produced at very low levels due to a premature stop codon in the mRNA, leading to nonsense-mediated mRNA decay.</text>
</comment>
<comment type="similarity">
    <text evidence="10">Belongs to the splicing factor SR family.</text>
</comment>
<comment type="sequence caution" evidence="10">
    <conflict type="frameshift">
        <sequence resource="EMBL-CDS" id="AAC39543"/>
    </conflict>
</comment>
<evidence type="ECO:0000250" key="1"/>
<evidence type="ECO:0000255" key="2">
    <source>
        <dbReference type="PROSITE-ProRule" id="PRU00176"/>
    </source>
</evidence>
<evidence type="ECO:0000256" key="3">
    <source>
        <dbReference type="SAM" id="MobiDB-lite"/>
    </source>
</evidence>
<evidence type="ECO:0000269" key="4">
    <source>
    </source>
</evidence>
<evidence type="ECO:0000303" key="5">
    <source>
    </source>
</evidence>
<evidence type="ECO:0000303" key="6">
    <source>
    </source>
</evidence>
<evidence type="ECO:0000303" key="7">
    <source>
    </source>
</evidence>
<evidence type="ECO:0000303" key="8">
    <source>
    </source>
</evidence>
<evidence type="ECO:0000303" key="9">
    <source ref="4"/>
</evidence>
<evidence type="ECO:0000305" key="10"/>
<evidence type="ECO:0007744" key="11">
    <source>
    </source>
</evidence>
<evidence type="ECO:0007744" key="12">
    <source>
    </source>
</evidence>
<evidence type="ECO:0007744" key="13">
    <source>
    </source>
</evidence>
<evidence type="ECO:0007744" key="14">
    <source>
    </source>
</evidence>
<evidence type="ECO:0007744" key="15">
    <source>
    </source>
</evidence>
<gene>
    <name type="primary">SRSF5</name>
    <name type="synonym">HRS</name>
    <name type="synonym">SFRS5</name>
    <name type="synonym">SRP40</name>
</gene>
<name>SRSF5_HUMAN</name>
<proteinExistence type="evidence at protein level"/>
<accession>Q13243</accession>
<accession>O14797</accession>
<accession>Q16662</accession>
<accession>Q49AD6</accession>
<accession>Q6FGE0</accession>
<reference key="1">
    <citation type="journal article" date="1995" name="EMBO J.">
        <title>Identification and characterization of three members of the human SR family of pre-mRNA splicing factors.</title>
        <authorList>
            <person name="Screaton G.R."/>
            <person name="Caceres J.F."/>
            <person name="Mayeda A."/>
            <person name="Bell M.V."/>
            <person name="Plebanski M."/>
            <person name="Jackson D.G."/>
            <person name="Bell J.I."/>
            <person name="Krainer A.R."/>
        </authorList>
    </citation>
    <scope>NUCLEOTIDE SEQUENCE [MRNA] (ISOFORMS SRP40-1 AND SRP40-2)</scope>
    <source>
        <tissue>Colon</tissue>
    </source>
</reference>
<reference key="2">
    <citation type="submission" date="2003-05" db="EMBL/GenBank/DDBJ databases">
        <title>Cloning of human full-length CDSs in BD Creator(TM) system donor vector.</title>
        <authorList>
            <person name="Kalnine N."/>
            <person name="Chen X."/>
            <person name="Rolfs A."/>
            <person name="Halleck A."/>
            <person name="Hines L."/>
            <person name="Eisenstein S."/>
            <person name="Koundinya M."/>
            <person name="Raphael J."/>
            <person name="Moreira D."/>
            <person name="Kelley T."/>
            <person name="LaBaer J."/>
            <person name="Lin Y."/>
            <person name="Phelan M."/>
            <person name="Farmer A."/>
        </authorList>
    </citation>
    <scope>NUCLEOTIDE SEQUENCE [LARGE SCALE MRNA] (ISOFORM SRP40-1)</scope>
</reference>
<reference key="3">
    <citation type="journal article" date="2004" name="Nat. Genet.">
        <title>Complete sequencing and characterization of 21,243 full-length human cDNAs.</title>
        <authorList>
            <person name="Ota T."/>
            <person name="Suzuki Y."/>
            <person name="Nishikawa T."/>
            <person name="Otsuki T."/>
            <person name="Sugiyama T."/>
            <person name="Irie R."/>
            <person name="Wakamatsu A."/>
            <person name="Hayashi K."/>
            <person name="Sato H."/>
            <person name="Nagai K."/>
            <person name="Kimura K."/>
            <person name="Makita H."/>
            <person name="Sekine M."/>
            <person name="Obayashi M."/>
            <person name="Nishi T."/>
            <person name="Shibahara T."/>
            <person name="Tanaka T."/>
            <person name="Ishii S."/>
            <person name="Yamamoto J."/>
            <person name="Saito K."/>
            <person name="Kawai Y."/>
            <person name="Isono Y."/>
            <person name="Nakamura Y."/>
            <person name="Nagahari K."/>
            <person name="Murakami K."/>
            <person name="Yasuda T."/>
            <person name="Iwayanagi T."/>
            <person name="Wagatsuma M."/>
            <person name="Shiratori A."/>
            <person name="Sudo H."/>
            <person name="Hosoiri T."/>
            <person name="Kaku Y."/>
            <person name="Kodaira H."/>
            <person name="Kondo H."/>
            <person name="Sugawara M."/>
            <person name="Takahashi M."/>
            <person name="Kanda K."/>
            <person name="Yokoi T."/>
            <person name="Furuya T."/>
            <person name="Kikkawa E."/>
            <person name="Omura Y."/>
            <person name="Abe K."/>
            <person name="Kamihara K."/>
            <person name="Katsuta N."/>
            <person name="Sato K."/>
            <person name="Tanikawa M."/>
            <person name="Yamazaki M."/>
            <person name="Ninomiya K."/>
            <person name="Ishibashi T."/>
            <person name="Yamashita H."/>
            <person name="Murakawa K."/>
            <person name="Fujimori K."/>
            <person name="Tanai H."/>
            <person name="Kimata M."/>
            <person name="Watanabe M."/>
            <person name="Hiraoka S."/>
            <person name="Chiba Y."/>
            <person name="Ishida S."/>
            <person name="Ono Y."/>
            <person name="Takiguchi S."/>
            <person name="Watanabe S."/>
            <person name="Yosida M."/>
            <person name="Hotuta T."/>
            <person name="Kusano J."/>
            <person name="Kanehori K."/>
            <person name="Takahashi-Fujii A."/>
            <person name="Hara H."/>
            <person name="Tanase T.-O."/>
            <person name="Nomura Y."/>
            <person name="Togiya S."/>
            <person name="Komai F."/>
            <person name="Hara R."/>
            <person name="Takeuchi K."/>
            <person name="Arita M."/>
            <person name="Imose N."/>
            <person name="Musashino K."/>
            <person name="Yuuki H."/>
            <person name="Oshima A."/>
            <person name="Sasaki N."/>
            <person name="Aotsuka S."/>
            <person name="Yoshikawa Y."/>
            <person name="Matsunawa H."/>
            <person name="Ichihara T."/>
            <person name="Shiohata N."/>
            <person name="Sano S."/>
            <person name="Moriya S."/>
            <person name="Momiyama H."/>
            <person name="Satoh N."/>
            <person name="Takami S."/>
            <person name="Terashima Y."/>
            <person name="Suzuki O."/>
            <person name="Nakagawa S."/>
            <person name="Senoh A."/>
            <person name="Mizoguchi H."/>
            <person name="Goto Y."/>
            <person name="Shimizu F."/>
            <person name="Wakebe H."/>
            <person name="Hishigaki H."/>
            <person name="Watanabe T."/>
            <person name="Sugiyama A."/>
            <person name="Takemoto M."/>
            <person name="Kawakami B."/>
            <person name="Yamazaki M."/>
            <person name="Watanabe K."/>
            <person name="Kumagai A."/>
            <person name="Itakura S."/>
            <person name="Fukuzumi Y."/>
            <person name="Fujimori Y."/>
            <person name="Komiyama M."/>
            <person name="Tashiro H."/>
            <person name="Tanigami A."/>
            <person name="Fujiwara T."/>
            <person name="Ono T."/>
            <person name="Yamada K."/>
            <person name="Fujii Y."/>
            <person name="Ozaki K."/>
            <person name="Hirao M."/>
            <person name="Ohmori Y."/>
            <person name="Kawabata A."/>
            <person name="Hikiji T."/>
            <person name="Kobatake N."/>
            <person name="Inagaki H."/>
            <person name="Ikema Y."/>
            <person name="Okamoto S."/>
            <person name="Okitani R."/>
            <person name="Kawakami T."/>
            <person name="Noguchi S."/>
            <person name="Itoh T."/>
            <person name="Shigeta K."/>
            <person name="Senba T."/>
            <person name="Matsumura K."/>
            <person name="Nakajima Y."/>
            <person name="Mizuno T."/>
            <person name="Morinaga M."/>
            <person name="Sasaki M."/>
            <person name="Togashi T."/>
            <person name="Oyama M."/>
            <person name="Hata H."/>
            <person name="Watanabe M."/>
            <person name="Komatsu T."/>
            <person name="Mizushima-Sugano J."/>
            <person name="Satoh T."/>
            <person name="Shirai Y."/>
            <person name="Takahashi Y."/>
            <person name="Nakagawa K."/>
            <person name="Okumura K."/>
            <person name="Nagase T."/>
            <person name="Nomura N."/>
            <person name="Kikuchi H."/>
            <person name="Masuho Y."/>
            <person name="Yamashita R."/>
            <person name="Nakai K."/>
            <person name="Yada T."/>
            <person name="Nakamura Y."/>
            <person name="Ohara O."/>
            <person name="Isogai T."/>
            <person name="Sugano S."/>
        </authorList>
    </citation>
    <scope>NUCLEOTIDE SEQUENCE [LARGE SCALE MRNA] (ISOFORM SRP40-2)</scope>
    <source>
        <tissue>Testis</tissue>
    </source>
</reference>
<reference key="4">
    <citation type="submission" date="2004-06" db="EMBL/GenBank/DDBJ databases">
        <title>Cloning of human full open reading frames in Gateway(TM) system entry vector (pDONR201).</title>
        <authorList>
            <person name="Ebert L."/>
            <person name="Schick M."/>
            <person name="Neubert P."/>
            <person name="Schatten R."/>
            <person name="Henze S."/>
            <person name="Korn B."/>
        </authorList>
    </citation>
    <scope>NUCLEOTIDE SEQUENCE [LARGE SCALE MRNA] (ISOFORM SRP40-2)</scope>
</reference>
<reference key="5">
    <citation type="journal article" date="2007" name="BMC Genomics">
        <title>The full-ORF clone resource of the German cDNA consortium.</title>
        <authorList>
            <person name="Bechtel S."/>
            <person name="Rosenfelder H."/>
            <person name="Duda A."/>
            <person name="Schmidt C.P."/>
            <person name="Ernst U."/>
            <person name="Wellenreuther R."/>
            <person name="Mehrle A."/>
            <person name="Schuster C."/>
            <person name="Bahr A."/>
            <person name="Bloecker H."/>
            <person name="Heubner D."/>
            <person name="Hoerlein A."/>
            <person name="Michel G."/>
            <person name="Wedler H."/>
            <person name="Koehrer K."/>
            <person name="Ottenwaelder B."/>
            <person name="Poustka A."/>
            <person name="Wiemann S."/>
            <person name="Schupp I."/>
        </authorList>
    </citation>
    <scope>NUCLEOTIDE SEQUENCE [LARGE SCALE MRNA] (ISOFORM SRP40-2)</scope>
    <source>
        <tissue>Endometrial tumor</tissue>
    </source>
</reference>
<reference key="6">
    <citation type="journal article" date="2008" name="Nat. Methods">
        <title>Human protein factory for converting the transcriptome into an in vitro-expressed proteome.</title>
        <authorList>
            <person name="Goshima N."/>
            <person name="Kawamura Y."/>
            <person name="Fukumoto A."/>
            <person name="Miura A."/>
            <person name="Honma R."/>
            <person name="Satoh R."/>
            <person name="Wakamatsu A."/>
            <person name="Yamamoto J."/>
            <person name="Kimura K."/>
            <person name="Nishikawa T."/>
            <person name="Andoh T."/>
            <person name="Iida Y."/>
            <person name="Ishikawa K."/>
            <person name="Ito E."/>
            <person name="Kagawa N."/>
            <person name="Kaminaga C."/>
            <person name="Kanehori K."/>
            <person name="Kawakami B."/>
            <person name="Kenmochi K."/>
            <person name="Kimura R."/>
            <person name="Kobayashi M."/>
            <person name="Kuroita T."/>
            <person name="Kuwayama H."/>
            <person name="Maruyama Y."/>
            <person name="Matsuo K."/>
            <person name="Minami K."/>
            <person name="Mitsubori M."/>
            <person name="Mori M."/>
            <person name="Morishita R."/>
            <person name="Murase A."/>
            <person name="Nishikawa A."/>
            <person name="Nishikawa S."/>
            <person name="Okamoto T."/>
            <person name="Sakagami N."/>
            <person name="Sakamoto Y."/>
            <person name="Sasaki Y."/>
            <person name="Seki T."/>
            <person name="Sono S."/>
            <person name="Sugiyama A."/>
            <person name="Sumiya T."/>
            <person name="Takayama T."/>
            <person name="Takayama Y."/>
            <person name="Takeda H."/>
            <person name="Togashi T."/>
            <person name="Yahata K."/>
            <person name="Yamada H."/>
            <person name="Yanagisawa Y."/>
            <person name="Endo Y."/>
            <person name="Imamoto F."/>
            <person name="Kisu Y."/>
            <person name="Tanaka S."/>
            <person name="Isogai T."/>
            <person name="Imai J."/>
            <person name="Watanabe S."/>
            <person name="Nomura N."/>
        </authorList>
    </citation>
    <scope>NUCLEOTIDE SEQUENCE [LARGE SCALE MRNA] (ISOFORM SRP40-2)</scope>
</reference>
<reference key="7">
    <citation type="journal article" date="2004" name="Genome Res.">
        <title>The status, quality, and expansion of the NIH full-length cDNA project: the Mammalian Gene Collection (MGC).</title>
        <authorList>
            <consortium name="The MGC Project Team"/>
        </authorList>
    </citation>
    <scope>NUCLEOTIDE SEQUENCE [LARGE SCALE MRNA] (ISOFORM SRP40-1)</scope>
    <source>
        <tissue>Skin</tissue>
        <tissue>Testis</tissue>
    </source>
</reference>
<reference key="8">
    <citation type="journal article" date="1997" name="Gene">
        <title>Alternative splicing and structure of the human and mouse SFRS5/HRS/SRp40 genes.</title>
        <authorList>
            <person name="Du K."/>
            <person name="Taub R."/>
        </authorList>
    </citation>
    <scope>NUCLEOTIDE SEQUENCE [GENOMIC DNA] OF 1-192</scope>
    <scope>ALTERNATIVE SPLICING</scope>
    <source>
        <tissue>Thymus</tissue>
    </source>
</reference>
<reference key="9">
    <citation type="journal article" date="1992" name="Genes Dev.">
        <title>SR proteins: a conserved family of pre-mRNA splicing factors.</title>
        <authorList>
            <person name="Zahler A.M."/>
            <person name="Lane W.S."/>
            <person name="Stolk J.A."/>
            <person name="Roth M.B."/>
        </authorList>
    </citation>
    <scope>PROTEIN SEQUENCE OF 130-158</scope>
</reference>
<reference key="10">
    <citation type="journal article" date="1998" name="Genes Dev.">
        <title>A coactivator of pre-mRNA splicing.</title>
        <authorList>
            <person name="Blencowe B.J."/>
            <person name="Issner R."/>
            <person name="Nickerson J.A."/>
            <person name="Sharp P.A."/>
        </authorList>
    </citation>
    <scope>IDENTIFICATION IN A MRNA SPLICING COMPLEX WITH SRSF4; SNRNP70; SNRPA1; SRRM1 AND SRRM2</scope>
</reference>
<reference key="11">
    <citation type="journal article" date="2004" name="Genome Biol.">
        <title>An unappreciated role for RNA surveillance.</title>
        <authorList>
            <person name="Hillman R.T."/>
            <person name="Green R.E."/>
            <person name="Brenner S.E."/>
        </authorList>
    </citation>
    <scope>SPLICE ISOFORM(S) THAT ARE POTENTIAL NMD TARGET(S)</scope>
</reference>
<reference key="12">
    <citation type="journal article" date="2006" name="Cell">
        <title>Global, in vivo, and site-specific phosphorylation dynamics in signaling networks.</title>
        <authorList>
            <person name="Olsen J.V."/>
            <person name="Blagoev B."/>
            <person name="Gnad F."/>
            <person name="Macek B."/>
            <person name="Kumar C."/>
            <person name="Mortensen P."/>
            <person name="Mann M."/>
        </authorList>
    </citation>
    <scope>PHOSPHORYLATION [LARGE SCALE ANALYSIS] AT SER-250 AND SER-253</scope>
    <scope>IDENTIFICATION BY MASS SPECTROMETRY [LARGE SCALE ANALYSIS]</scope>
    <source>
        <tissue>Cervix carcinoma</tissue>
    </source>
</reference>
<reference key="13">
    <citation type="journal article" date="2008" name="Proc. Natl. Acad. Sci. U.S.A.">
        <title>A quantitative atlas of mitotic phosphorylation.</title>
        <authorList>
            <person name="Dephoure N."/>
            <person name="Zhou C."/>
            <person name="Villen J."/>
            <person name="Beausoleil S.A."/>
            <person name="Bakalarski C.E."/>
            <person name="Elledge S.J."/>
            <person name="Gygi S.P."/>
        </authorList>
    </citation>
    <scope>IDENTIFICATION BY MASS SPECTROMETRY [LARGE SCALE ANALYSIS]</scope>
    <source>
        <tissue>Cervix carcinoma</tissue>
    </source>
</reference>
<reference key="14">
    <citation type="journal article" date="2009" name="Science">
        <title>Lysine acetylation targets protein complexes and co-regulates major cellular functions.</title>
        <authorList>
            <person name="Choudhary C."/>
            <person name="Kumar C."/>
            <person name="Gnad F."/>
            <person name="Nielsen M.L."/>
            <person name="Rehman M."/>
            <person name="Walther T.C."/>
            <person name="Olsen J.V."/>
            <person name="Mann M."/>
        </authorList>
    </citation>
    <scope>ACETYLATION [LARGE SCALE ANALYSIS] AT LYS-167</scope>
    <scope>IDENTIFICATION BY MASS SPECTROMETRY [LARGE SCALE ANALYSIS]</scope>
</reference>
<reference key="15">
    <citation type="journal article" date="2011" name="BMC Syst. Biol.">
        <title>Initial characterization of the human central proteome.</title>
        <authorList>
            <person name="Burkard T.R."/>
            <person name="Planyavsky M."/>
            <person name="Kaupe I."/>
            <person name="Breitwieser F.P."/>
            <person name="Buerckstuemmer T."/>
            <person name="Bennett K.L."/>
            <person name="Superti-Furga G."/>
            <person name="Colinge J."/>
        </authorList>
    </citation>
    <scope>IDENTIFICATION BY MASS SPECTROMETRY [LARGE SCALE ANALYSIS]</scope>
</reference>
<reference key="16">
    <citation type="journal article" date="2011" name="Sci. Signal.">
        <title>System-wide temporal characterization of the proteome and phosphoproteome of human embryonic stem cell differentiation.</title>
        <authorList>
            <person name="Rigbolt K.T."/>
            <person name="Prokhorova T.A."/>
            <person name="Akimov V."/>
            <person name="Henningsen J."/>
            <person name="Johansen P.T."/>
            <person name="Kratchmarova I."/>
            <person name="Kassem M."/>
            <person name="Mann M."/>
            <person name="Olsen J.V."/>
            <person name="Blagoev B."/>
        </authorList>
    </citation>
    <scope>PHOSPHORYLATION [LARGE SCALE ANALYSIS] AT SER-227; SER-229; SER-233; SER-250 AND SER-253</scope>
    <scope>IDENTIFICATION BY MASS SPECTROMETRY [LARGE SCALE ANALYSIS]</scope>
</reference>
<reference key="17">
    <citation type="journal article" date="2013" name="J. Proteome Res.">
        <title>Toward a comprehensive characterization of a human cancer cell phosphoproteome.</title>
        <authorList>
            <person name="Zhou H."/>
            <person name="Di Palma S."/>
            <person name="Preisinger C."/>
            <person name="Peng M."/>
            <person name="Polat A.N."/>
            <person name="Heck A.J."/>
            <person name="Mohammed S."/>
        </authorList>
    </citation>
    <scope>PHOSPHORYLATION [LARGE SCALE ANALYSIS] AT SER-86</scope>
    <scope>IDENTIFICATION BY MASS SPECTROMETRY [LARGE SCALE ANALYSIS]</scope>
    <source>
        <tissue>Cervix carcinoma</tissue>
        <tissue>Erythroleukemia</tissue>
    </source>
</reference>
<reference key="18">
    <citation type="journal article" date="2014" name="J. Proteomics">
        <title>An enzyme assisted RP-RPLC approach for in-depth analysis of human liver phosphoproteome.</title>
        <authorList>
            <person name="Bian Y."/>
            <person name="Song C."/>
            <person name="Cheng K."/>
            <person name="Dong M."/>
            <person name="Wang F."/>
            <person name="Huang J."/>
            <person name="Sun D."/>
            <person name="Wang L."/>
            <person name="Ye M."/>
            <person name="Zou H."/>
        </authorList>
    </citation>
    <scope>PHOSPHORYLATION [LARGE SCALE ANALYSIS] AT SER-253</scope>
    <scope>IDENTIFICATION BY MASS SPECTROMETRY [LARGE SCALE ANALYSIS]</scope>
    <source>
        <tissue>Liver</tissue>
    </source>
</reference>
<keyword id="KW-0007">Acetylation</keyword>
<keyword id="KW-0025">Alternative splicing</keyword>
<keyword id="KW-0903">Direct protein sequencing</keyword>
<keyword id="KW-0507">mRNA processing</keyword>
<keyword id="KW-0508">mRNA splicing</keyword>
<keyword id="KW-0539">Nucleus</keyword>
<keyword id="KW-0597">Phosphoprotein</keyword>
<keyword id="KW-1267">Proteomics identification</keyword>
<keyword id="KW-1185">Reference proteome</keyword>
<keyword id="KW-0677">Repeat</keyword>
<keyword id="KW-0694">RNA-binding</keyword>